<feature type="chain" id="PRO_0000208678" description="Cytochrome c6">
    <location>
        <begin position="1"/>
        <end position="83"/>
    </location>
</feature>
<feature type="binding site" description="covalent" evidence="2 3">
    <location>
        <position position="14"/>
    </location>
    <ligand>
        <name>heme c</name>
        <dbReference type="ChEBI" id="CHEBI:61717"/>
    </ligand>
</feature>
<feature type="binding site" description="covalent" evidence="2 3">
    <location>
        <position position="17"/>
    </location>
    <ligand>
        <name>heme c</name>
        <dbReference type="ChEBI" id="CHEBI:61717"/>
    </ligand>
</feature>
<feature type="binding site" description="axial binding residue">
    <location>
        <position position="18"/>
    </location>
    <ligand>
        <name>heme c</name>
        <dbReference type="ChEBI" id="CHEBI:61717"/>
    </ligand>
    <ligandPart>
        <name>Fe</name>
        <dbReference type="ChEBI" id="CHEBI:18248"/>
    </ligandPart>
</feature>
<feature type="binding site" description="axial binding residue">
    <location>
        <position position="59"/>
    </location>
    <ligand>
        <name>heme c</name>
        <dbReference type="ChEBI" id="CHEBI:61717"/>
    </ligand>
    <ligandPart>
        <name>Fe</name>
        <dbReference type="ChEBI" id="CHEBI:18248"/>
    </ligandPart>
</feature>
<feature type="modified residue" description="N6-methyllysine; partial" evidence="3">
    <location>
        <position position="24"/>
    </location>
</feature>
<keyword id="KW-0150">Chloroplast</keyword>
<keyword id="KW-0903">Direct protein sequencing</keyword>
<keyword id="KW-0249">Electron transport</keyword>
<keyword id="KW-0349">Heme</keyword>
<keyword id="KW-0408">Iron</keyword>
<keyword id="KW-0479">Metal-binding</keyword>
<keyword id="KW-0488">Methylation</keyword>
<keyword id="KW-0602">Photosynthesis</keyword>
<keyword id="KW-0934">Plastid</keyword>
<keyword id="KW-0793">Thylakoid</keyword>
<keyword id="KW-0813">Transport</keyword>
<sequence>GDIANGEQVFTGNCAACHSVZZZKTLELSSLWKAKSYLANFNGDESAIVYQVTNGKNAMPAFGGRLEDDEIANVASYVLSKAG</sequence>
<reference key="1">
    <citation type="journal article" date="1972" name="Can. J. Biochem.">
        <title>The amino acid sequence of cytochrome c-553 from the Chrysophycean alga Monochrysis lutheri.</title>
        <authorList>
            <person name="Laycock M.V."/>
        </authorList>
    </citation>
    <scope>PROTEIN SEQUENCE</scope>
    <scope>METHYLATION AT LYS-24</scope>
</reference>
<reference key="2">
    <citation type="submission" date="1974-12" db="PIR data bank">
        <authorList>
            <person name="Laycock M.V."/>
        </authorList>
    </citation>
    <scope>SEQUENCE REVISION TO 2; 5; 7; 13 AND 73</scope>
</reference>
<name>CYC6_DIALT</name>
<comment type="function">
    <text>Functions as an electron carrier between membrane-bound cytochrome b6-f and photosystem I in oxygenic photosynthesis.</text>
</comment>
<comment type="subunit">
    <text evidence="1">Monomer.</text>
</comment>
<comment type="subcellular location">
    <subcellularLocation>
        <location>Plastid</location>
        <location>Chloroplast thylakoid lumen</location>
    </subcellularLocation>
</comment>
<comment type="PTM">
    <text>Binds 1 heme c group covalently per subunit.</text>
</comment>
<comment type="PTM">
    <text>50% of the molecules were found to be monomethylated at Lys-24.</text>
</comment>
<comment type="similarity">
    <text evidence="4">Belongs to the cytochrome c family. PetJ subfamily.</text>
</comment>
<organism>
    <name type="scientific">Diacronema lutheri</name>
    <name type="common">Unicellular marine alga</name>
    <name type="synonym">Monochrysis lutheri</name>
    <dbReference type="NCBI Taxonomy" id="2081491"/>
    <lineage>
        <taxon>Eukaryota</taxon>
        <taxon>Haptista</taxon>
        <taxon>Haptophyta</taxon>
        <taxon>Pavlovales</taxon>
        <taxon>Pavlovaceae</taxon>
        <taxon>Diacronema</taxon>
    </lineage>
</organism>
<gene>
    <name type="primary">petJ</name>
</gene>
<dbReference type="PIR" id="A00099">
    <property type="entry name" value="CCML6"/>
</dbReference>
<dbReference type="iPTMnet" id="P00107"/>
<dbReference type="GO" id="GO:0009543">
    <property type="term" value="C:chloroplast thylakoid lumen"/>
    <property type="evidence" value="ECO:0007669"/>
    <property type="project" value="UniProtKB-SubCell"/>
</dbReference>
<dbReference type="GO" id="GO:0009055">
    <property type="term" value="F:electron transfer activity"/>
    <property type="evidence" value="ECO:0007669"/>
    <property type="project" value="InterPro"/>
</dbReference>
<dbReference type="GO" id="GO:0020037">
    <property type="term" value="F:heme binding"/>
    <property type="evidence" value="ECO:0007669"/>
    <property type="project" value="InterPro"/>
</dbReference>
<dbReference type="GO" id="GO:0005506">
    <property type="term" value="F:iron ion binding"/>
    <property type="evidence" value="ECO:0007669"/>
    <property type="project" value="InterPro"/>
</dbReference>
<dbReference type="GO" id="GO:0015979">
    <property type="term" value="P:photosynthesis"/>
    <property type="evidence" value="ECO:0007669"/>
    <property type="project" value="UniProtKB-KW"/>
</dbReference>
<dbReference type="Gene3D" id="1.10.760.10">
    <property type="entry name" value="Cytochrome c-like domain"/>
    <property type="match status" value="1"/>
</dbReference>
<dbReference type="InterPro" id="IPR009056">
    <property type="entry name" value="Cyt_c-like_dom"/>
</dbReference>
<dbReference type="InterPro" id="IPR036909">
    <property type="entry name" value="Cyt_c-like_dom_sf"/>
</dbReference>
<dbReference type="InterPro" id="IPR008168">
    <property type="entry name" value="Cyt_C_IC"/>
</dbReference>
<dbReference type="InterPro" id="IPR051459">
    <property type="entry name" value="Cytochrome_c-type_DH"/>
</dbReference>
<dbReference type="PANTHER" id="PTHR35008:SF8">
    <property type="entry name" value="ALCOHOL DEHYDROGENASE CYTOCHROME C SUBUNIT"/>
    <property type="match status" value="1"/>
</dbReference>
<dbReference type="PANTHER" id="PTHR35008">
    <property type="entry name" value="BLL4482 PROTEIN-RELATED"/>
    <property type="match status" value="1"/>
</dbReference>
<dbReference type="Pfam" id="PF13442">
    <property type="entry name" value="Cytochrome_CBB3"/>
    <property type="match status" value="1"/>
</dbReference>
<dbReference type="PRINTS" id="PR00605">
    <property type="entry name" value="CYTCHROMECIC"/>
</dbReference>
<dbReference type="SUPFAM" id="SSF46626">
    <property type="entry name" value="Cytochrome c"/>
    <property type="match status" value="1"/>
</dbReference>
<dbReference type="PROSITE" id="PS51007">
    <property type="entry name" value="CYTC"/>
    <property type="match status" value="1"/>
</dbReference>
<evidence type="ECO:0000250" key="1"/>
<evidence type="ECO:0000255" key="2">
    <source>
        <dbReference type="PROSITE-ProRule" id="PRU00433"/>
    </source>
</evidence>
<evidence type="ECO:0000269" key="3">
    <source>
    </source>
</evidence>
<evidence type="ECO:0000305" key="4"/>
<accession>P00107</accession>
<proteinExistence type="evidence at protein level"/>
<protein>
    <recommendedName>
        <fullName>Cytochrome c6</fullName>
    </recommendedName>
    <alternativeName>
        <fullName>Cytochrome c-553</fullName>
    </alternativeName>
    <alternativeName>
        <fullName>Cytochrome c553</fullName>
    </alternativeName>
    <alternativeName>
        <fullName>Soluble cytochrome f</fullName>
    </alternativeName>
</protein>